<protein>
    <recommendedName>
        <fullName evidence="1">RNA polymerase sigma factor SigA</fullName>
    </recommendedName>
    <alternativeName>
        <fullName>Sigma-66</fullName>
    </alternativeName>
    <alternativeName>
        <fullName evidence="1">Sigma-70</fullName>
    </alternativeName>
    <alternativeName>
        <fullName>Sigma-A</fullName>
    </alternativeName>
</protein>
<keyword id="KW-0963">Cytoplasm</keyword>
<keyword id="KW-0238">DNA-binding</keyword>
<keyword id="KW-1185">Reference proteome</keyword>
<keyword id="KW-0731">Sigma factor</keyword>
<keyword id="KW-0804">Transcription</keyword>
<keyword id="KW-0805">Transcription regulation</keyword>
<comment type="function">
    <text evidence="1">Sigma factors are initiation factors that promote the attachment of RNA polymerase to specific initiation sites and are then released. This sigma factor is the primary sigma factor during exponential growth.</text>
</comment>
<comment type="subunit">
    <text evidence="1">Interacts transiently with the RNA polymerase catalytic core.</text>
</comment>
<comment type="interaction">
    <interactant intactId="EBI-16224227">
        <id>P18333</id>
    </interactant>
    <interactant intactId="EBI-16224258">
        <id>A0A0H3MHH0</id>
        <label>CTL0766</label>
    </interactant>
    <organismsDiffer>true</organismsDiffer>
    <experiments>4</experiments>
</comment>
<comment type="subcellular location">
    <subcellularLocation>
        <location evidence="1">Cytoplasm</location>
    </subcellularLocation>
</comment>
<comment type="similarity">
    <text evidence="1">Belongs to the sigma-70 factor family. RpoD/SigA subfamily.</text>
</comment>
<proteinExistence type="evidence at protein level"/>
<feature type="chain" id="PRO_0000093883" description="RNA polymerase sigma factor SigA">
    <location>
        <begin position="1"/>
        <end position="571"/>
    </location>
</feature>
<feature type="DNA-binding region" description="H-T-H motif" evidence="1">
    <location>
        <begin position="515"/>
        <end position="534"/>
    </location>
</feature>
<feature type="region of interest" description="Sigma-70 factor domain-2" evidence="1">
    <location>
        <begin position="321"/>
        <end position="391"/>
    </location>
</feature>
<feature type="region of interest" description="Sigma-70 factor domain-3" evidence="1">
    <location>
        <begin position="400"/>
        <end position="476"/>
    </location>
</feature>
<feature type="region of interest" description="Sigma-70 factor domain-4" evidence="1">
    <location>
        <begin position="489"/>
        <end position="542"/>
    </location>
</feature>
<feature type="short sequence motif" description="Interaction with polymerase core subunit RpoC">
    <location>
        <begin position="345"/>
        <end position="348"/>
    </location>
</feature>
<sequence length="571" mass="66133">MRMDTLDSQAAEAAQEEEIQRKLEELVTLAKDQGFITYEEINEILPPSFDTPEQIDQVLIFLAGMDVQVLNQADVERQKERKKEAKELEGLAKRSEGTPDDPVRMYLKEMGTVPLLTREEEVEISKRIEKAQVQIERIILRFRYSTKEAVSIAQYLINGKERFDKIVSEKEVEDKTHFLNLLPKLISLLKEEDAYLEERLLALKDPALSKPDQARLNDELEKCRIRTQAYLRCFHCRHNVTEDFGEVVFKAYDSFLQLEQQINDLKARAERNKFAAAKLAAARRKLHKREVAAGRTLEEFKKDVRMLQRWMDKSQEAKKEMVESNLRLVISIAKKYTNRGLSFLDLIQEGNMGLMKAVEKFEYRRGYKFSTYATWWIRQAVTRAIADQARTIRIPVHMIETINKVLRGAKKLMMETGKEPTPEELGEELGFTPDRVREIYKIAQHPISLQAEVGDGGESSFGDFLEDTAVESPAEATGYSMLKDKMKEVLKTLTDRERFVLIHRFGLLDGRPKTLEEVGSAFNVTRERIRQIEAKALRKMRHPIRSKQLRAFLDLLEEEKIGSGKIKSYKN</sequence>
<name>SIGA_CHLTR</name>
<accession>P18333</accession>
<accession>P33516</accession>
<reference key="1">
    <citation type="journal article" date="1990" name="J. Biol. Chem.">
        <title>Chlamydia trachomatis RNA polymerase major sigma subunit. Sequence and structural comparison of conserved and unique regions with Escherichia coli sigma 70 and Bacillus subtilis sigma 43.</title>
        <authorList>
            <person name="Koehler J.E."/>
            <person name="Burgess R.R."/>
            <person name="Thompson N.E."/>
            <person name="Stephens R.S."/>
        </authorList>
    </citation>
    <scope>NUCLEOTIDE SEQUENCE [GENOMIC DNA]</scope>
    <source>
        <strain>Biovar trachomar / Serovar L2</strain>
    </source>
</reference>
<reference key="2">
    <citation type="journal article" date="1998" name="Science">
        <title>Genome sequence of an obligate intracellular pathogen of humans: Chlamydia trachomatis.</title>
        <authorList>
            <person name="Stephens R.S."/>
            <person name="Kalman S."/>
            <person name="Lammel C.J."/>
            <person name="Fan J."/>
            <person name="Marathe R."/>
            <person name="Aravind L."/>
            <person name="Mitchell W.P."/>
            <person name="Olinger L."/>
            <person name="Tatusov R.L."/>
            <person name="Zhao Q."/>
            <person name="Koonin E.V."/>
            <person name="Davis R.W."/>
        </authorList>
    </citation>
    <scope>NUCLEOTIDE SEQUENCE [LARGE SCALE GENOMIC DNA]</scope>
    <source>
        <strain>ATCC VR-885 / DSM 19411 / UW-3/Cx</strain>
    </source>
</reference>
<gene>
    <name evidence="1" type="primary">sigA</name>
    <name type="synonym">rpoD</name>
    <name type="ordered locus">CT_615</name>
</gene>
<organism>
    <name type="scientific">Chlamydia trachomatis serovar D (strain ATCC VR-885 / DSM 19411 / UW-3/Cx)</name>
    <dbReference type="NCBI Taxonomy" id="272561"/>
    <lineage>
        <taxon>Bacteria</taxon>
        <taxon>Pseudomonadati</taxon>
        <taxon>Chlamydiota</taxon>
        <taxon>Chlamydiia</taxon>
        <taxon>Chlamydiales</taxon>
        <taxon>Chlamydiaceae</taxon>
        <taxon>Chlamydia/Chlamydophila group</taxon>
        <taxon>Chlamydia</taxon>
    </lineage>
</organism>
<evidence type="ECO:0000255" key="1">
    <source>
        <dbReference type="HAMAP-Rule" id="MF_00963"/>
    </source>
</evidence>
<dbReference type="EMBL" id="J05546">
    <property type="protein sequence ID" value="AAA23165.1"/>
    <property type="molecule type" value="Genomic_DNA"/>
</dbReference>
<dbReference type="EMBL" id="AE001273">
    <property type="protein sequence ID" value="AAC68218.1"/>
    <property type="molecule type" value="Genomic_DNA"/>
</dbReference>
<dbReference type="PIR" id="A36627">
    <property type="entry name" value="RNCW7T"/>
</dbReference>
<dbReference type="RefSeq" id="NP_220132.1">
    <property type="nucleotide sequence ID" value="NC_000117.1"/>
</dbReference>
<dbReference type="RefSeq" id="WP_009871983.1">
    <property type="nucleotide sequence ID" value="NC_000117.1"/>
</dbReference>
<dbReference type="SMR" id="P18333"/>
<dbReference type="DIP" id="DIP-60079N"/>
<dbReference type="IntAct" id="P18333">
    <property type="interactions" value="1"/>
</dbReference>
<dbReference type="STRING" id="272561.CT_615"/>
<dbReference type="EnsemblBacteria" id="AAC68218">
    <property type="protein sequence ID" value="AAC68218"/>
    <property type="gene ID" value="CT_615"/>
</dbReference>
<dbReference type="GeneID" id="884395"/>
<dbReference type="KEGG" id="ctr:CT_615"/>
<dbReference type="PATRIC" id="fig|272561.5.peg.672"/>
<dbReference type="HOGENOM" id="CLU_014793_7_2_0"/>
<dbReference type="InParanoid" id="P18333"/>
<dbReference type="OrthoDB" id="9809557at2"/>
<dbReference type="Proteomes" id="UP000000431">
    <property type="component" value="Chromosome"/>
</dbReference>
<dbReference type="GO" id="GO:0005737">
    <property type="term" value="C:cytoplasm"/>
    <property type="evidence" value="ECO:0007669"/>
    <property type="project" value="UniProtKB-SubCell"/>
</dbReference>
<dbReference type="GO" id="GO:0003677">
    <property type="term" value="F:DNA binding"/>
    <property type="evidence" value="ECO:0007669"/>
    <property type="project" value="UniProtKB-UniRule"/>
</dbReference>
<dbReference type="GO" id="GO:0016987">
    <property type="term" value="F:sigma factor activity"/>
    <property type="evidence" value="ECO:0007669"/>
    <property type="project" value="UniProtKB-UniRule"/>
</dbReference>
<dbReference type="GO" id="GO:0006352">
    <property type="term" value="P:DNA-templated transcription initiation"/>
    <property type="evidence" value="ECO:0007669"/>
    <property type="project" value="UniProtKB-UniRule"/>
</dbReference>
<dbReference type="CDD" id="cd06171">
    <property type="entry name" value="Sigma70_r4"/>
    <property type="match status" value="1"/>
</dbReference>
<dbReference type="FunFam" id="1.10.601.10:FF:000001">
    <property type="entry name" value="RNA polymerase sigma factor SigA"/>
    <property type="match status" value="1"/>
</dbReference>
<dbReference type="Gene3D" id="1.10.601.10">
    <property type="entry name" value="RNA Polymerase Primary Sigma Factor"/>
    <property type="match status" value="1"/>
</dbReference>
<dbReference type="Gene3D" id="1.10.220.120">
    <property type="entry name" value="Sigma-70 factor, region 1.1"/>
    <property type="match status" value="1"/>
</dbReference>
<dbReference type="Gene3D" id="1.10.10.10">
    <property type="entry name" value="Winged helix-like DNA-binding domain superfamily/Winged helix DNA-binding domain"/>
    <property type="match status" value="2"/>
</dbReference>
<dbReference type="HAMAP" id="MF_00963">
    <property type="entry name" value="Sigma70_RpoD_SigA"/>
    <property type="match status" value="1"/>
</dbReference>
<dbReference type="InterPro" id="IPR014284">
    <property type="entry name" value="RNA_pol_sigma-70_dom"/>
</dbReference>
<dbReference type="InterPro" id="IPR000943">
    <property type="entry name" value="RNA_pol_sigma70"/>
</dbReference>
<dbReference type="InterPro" id="IPR009042">
    <property type="entry name" value="RNA_pol_sigma70_r1_2"/>
</dbReference>
<dbReference type="InterPro" id="IPR007627">
    <property type="entry name" value="RNA_pol_sigma70_r2"/>
</dbReference>
<dbReference type="InterPro" id="IPR007624">
    <property type="entry name" value="RNA_pol_sigma70_r3"/>
</dbReference>
<dbReference type="InterPro" id="IPR007630">
    <property type="entry name" value="RNA_pol_sigma70_r4"/>
</dbReference>
<dbReference type="InterPro" id="IPR007127">
    <property type="entry name" value="RNA_pol_sigma_70_r1_1"/>
</dbReference>
<dbReference type="InterPro" id="IPR042189">
    <property type="entry name" value="RNA_pol_sigma_70_r1_1_sf"/>
</dbReference>
<dbReference type="InterPro" id="IPR013325">
    <property type="entry name" value="RNA_pol_sigma_r2"/>
</dbReference>
<dbReference type="InterPro" id="IPR013324">
    <property type="entry name" value="RNA_pol_sigma_r3/r4-like"/>
</dbReference>
<dbReference type="InterPro" id="IPR012760">
    <property type="entry name" value="RNA_pol_sigma_RpoD_C"/>
</dbReference>
<dbReference type="InterPro" id="IPR050239">
    <property type="entry name" value="Sigma-70_RNA_pol_init_factors"/>
</dbReference>
<dbReference type="InterPro" id="IPR028630">
    <property type="entry name" value="Sigma70_RpoD"/>
</dbReference>
<dbReference type="InterPro" id="IPR036388">
    <property type="entry name" value="WH-like_DNA-bd_sf"/>
</dbReference>
<dbReference type="NCBIfam" id="NF004562">
    <property type="entry name" value="PRK05901.1-4"/>
    <property type="match status" value="1"/>
</dbReference>
<dbReference type="NCBIfam" id="TIGR02393">
    <property type="entry name" value="RpoD_Cterm"/>
    <property type="match status" value="1"/>
</dbReference>
<dbReference type="NCBIfam" id="TIGR02937">
    <property type="entry name" value="sigma70-ECF"/>
    <property type="match status" value="1"/>
</dbReference>
<dbReference type="PANTHER" id="PTHR30603">
    <property type="entry name" value="RNA POLYMERASE SIGMA FACTOR RPO"/>
    <property type="match status" value="1"/>
</dbReference>
<dbReference type="PANTHER" id="PTHR30603:SF60">
    <property type="entry name" value="RNA POLYMERASE SIGMA FACTOR RPOD"/>
    <property type="match status" value="1"/>
</dbReference>
<dbReference type="Pfam" id="PF03979">
    <property type="entry name" value="Sigma70_r1_1"/>
    <property type="match status" value="1"/>
</dbReference>
<dbReference type="Pfam" id="PF00140">
    <property type="entry name" value="Sigma70_r1_2"/>
    <property type="match status" value="1"/>
</dbReference>
<dbReference type="Pfam" id="PF04542">
    <property type="entry name" value="Sigma70_r2"/>
    <property type="match status" value="1"/>
</dbReference>
<dbReference type="Pfam" id="PF04539">
    <property type="entry name" value="Sigma70_r3"/>
    <property type="match status" value="1"/>
</dbReference>
<dbReference type="Pfam" id="PF04545">
    <property type="entry name" value="Sigma70_r4"/>
    <property type="match status" value="1"/>
</dbReference>
<dbReference type="PRINTS" id="PR00046">
    <property type="entry name" value="SIGMA70FCT"/>
</dbReference>
<dbReference type="SUPFAM" id="SSF88946">
    <property type="entry name" value="Sigma2 domain of RNA polymerase sigma factors"/>
    <property type="match status" value="1"/>
</dbReference>
<dbReference type="SUPFAM" id="SSF88659">
    <property type="entry name" value="Sigma3 and sigma4 domains of RNA polymerase sigma factors"/>
    <property type="match status" value="2"/>
</dbReference>
<dbReference type="PROSITE" id="PS00715">
    <property type="entry name" value="SIGMA70_1"/>
    <property type="match status" value="1"/>
</dbReference>
<dbReference type="PROSITE" id="PS00716">
    <property type="entry name" value="SIGMA70_2"/>
    <property type="match status" value="1"/>
</dbReference>